<sequence length="135" mass="15018">MRVCAKWVLLSRWLVLTYVLMVCCKLMSASSQHLRGHAGHHLIKPGTCEVVAVHRCCNKNRIEERSQTVKCSCFPGQVAGTTRAQPSCVEAAIVIEKWWCHMNPCLEGEDCKVLPDSSGWSCSSGNKVKTTKVTR</sequence>
<reference key="1">
    <citation type="journal article" date="2004" name="Genomics">
        <title>TAFA: a novel secreted family with conserved cysteine residues and restricted expression in the brain.</title>
        <authorList>
            <person name="Tom Tang Y."/>
            <person name="Emtage P."/>
            <person name="Funk W.D."/>
            <person name="Hu T."/>
            <person name="Arterburn M."/>
            <person name="Park E.E."/>
            <person name="Rupp F."/>
        </authorList>
    </citation>
    <scope>NUCLEOTIDE SEQUENCE [MRNA]</scope>
    <scope>TISSUE SPECIFICITY</scope>
    <source>
        <strain>C57BL/6J</strain>
    </source>
</reference>
<reference key="2">
    <citation type="journal article" date="2005" name="Science">
        <title>The transcriptional landscape of the mammalian genome.</title>
        <authorList>
            <person name="Carninci P."/>
            <person name="Kasukawa T."/>
            <person name="Katayama S."/>
            <person name="Gough J."/>
            <person name="Frith M.C."/>
            <person name="Maeda N."/>
            <person name="Oyama R."/>
            <person name="Ravasi T."/>
            <person name="Lenhard B."/>
            <person name="Wells C."/>
            <person name="Kodzius R."/>
            <person name="Shimokawa K."/>
            <person name="Bajic V.B."/>
            <person name="Brenner S.E."/>
            <person name="Batalov S."/>
            <person name="Forrest A.R."/>
            <person name="Zavolan M."/>
            <person name="Davis M.J."/>
            <person name="Wilming L.G."/>
            <person name="Aidinis V."/>
            <person name="Allen J.E."/>
            <person name="Ambesi-Impiombato A."/>
            <person name="Apweiler R."/>
            <person name="Aturaliya R.N."/>
            <person name="Bailey T.L."/>
            <person name="Bansal M."/>
            <person name="Baxter L."/>
            <person name="Beisel K.W."/>
            <person name="Bersano T."/>
            <person name="Bono H."/>
            <person name="Chalk A.M."/>
            <person name="Chiu K.P."/>
            <person name="Choudhary V."/>
            <person name="Christoffels A."/>
            <person name="Clutterbuck D.R."/>
            <person name="Crowe M.L."/>
            <person name="Dalla E."/>
            <person name="Dalrymple B.P."/>
            <person name="de Bono B."/>
            <person name="Della Gatta G."/>
            <person name="di Bernardo D."/>
            <person name="Down T."/>
            <person name="Engstrom P."/>
            <person name="Fagiolini M."/>
            <person name="Faulkner G."/>
            <person name="Fletcher C.F."/>
            <person name="Fukushima T."/>
            <person name="Furuno M."/>
            <person name="Futaki S."/>
            <person name="Gariboldi M."/>
            <person name="Georgii-Hemming P."/>
            <person name="Gingeras T.R."/>
            <person name="Gojobori T."/>
            <person name="Green R.E."/>
            <person name="Gustincich S."/>
            <person name="Harbers M."/>
            <person name="Hayashi Y."/>
            <person name="Hensch T.K."/>
            <person name="Hirokawa N."/>
            <person name="Hill D."/>
            <person name="Huminiecki L."/>
            <person name="Iacono M."/>
            <person name="Ikeo K."/>
            <person name="Iwama A."/>
            <person name="Ishikawa T."/>
            <person name="Jakt M."/>
            <person name="Kanapin A."/>
            <person name="Katoh M."/>
            <person name="Kawasawa Y."/>
            <person name="Kelso J."/>
            <person name="Kitamura H."/>
            <person name="Kitano H."/>
            <person name="Kollias G."/>
            <person name="Krishnan S.P."/>
            <person name="Kruger A."/>
            <person name="Kummerfeld S.K."/>
            <person name="Kurochkin I.V."/>
            <person name="Lareau L.F."/>
            <person name="Lazarevic D."/>
            <person name="Lipovich L."/>
            <person name="Liu J."/>
            <person name="Liuni S."/>
            <person name="McWilliam S."/>
            <person name="Madan Babu M."/>
            <person name="Madera M."/>
            <person name="Marchionni L."/>
            <person name="Matsuda H."/>
            <person name="Matsuzawa S."/>
            <person name="Miki H."/>
            <person name="Mignone F."/>
            <person name="Miyake S."/>
            <person name="Morris K."/>
            <person name="Mottagui-Tabar S."/>
            <person name="Mulder N."/>
            <person name="Nakano N."/>
            <person name="Nakauchi H."/>
            <person name="Ng P."/>
            <person name="Nilsson R."/>
            <person name="Nishiguchi S."/>
            <person name="Nishikawa S."/>
            <person name="Nori F."/>
            <person name="Ohara O."/>
            <person name="Okazaki Y."/>
            <person name="Orlando V."/>
            <person name="Pang K.C."/>
            <person name="Pavan W.J."/>
            <person name="Pavesi G."/>
            <person name="Pesole G."/>
            <person name="Petrovsky N."/>
            <person name="Piazza S."/>
            <person name="Reed J."/>
            <person name="Reid J.F."/>
            <person name="Ring B.Z."/>
            <person name="Ringwald M."/>
            <person name="Rost B."/>
            <person name="Ruan Y."/>
            <person name="Salzberg S.L."/>
            <person name="Sandelin A."/>
            <person name="Schneider C."/>
            <person name="Schoenbach C."/>
            <person name="Sekiguchi K."/>
            <person name="Semple C.A."/>
            <person name="Seno S."/>
            <person name="Sessa L."/>
            <person name="Sheng Y."/>
            <person name="Shibata Y."/>
            <person name="Shimada H."/>
            <person name="Shimada K."/>
            <person name="Silva D."/>
            <person name="Sinclair B."/>
            <person name="Sperling S."/>
            <person name="Stupka E."/>
            <person name="Sugiura K."/>
            <person name="Sultana R."/>
            <person name="Takenaka Y."/>
            <person name="Taki K."/>
            <person name="Tammoja K."/>
            <person name="Tan S.L."/>
            <person name="Tang S."/>
            <person name="Taylor M.S."/>
            <person name="Tegner J."/>
            <person name="Teichmann S.A."/>
            <person name="Ueda H.R."/>
            <person name="van Nimwegen E."/>
            <person name="Verardo R."/>
            <person name="Wei C.L."/>
            <person name="Yagi K."/>
            <person name="Yamanishi H."/>
            <person name="Zabarovsky E."/>
            <person name="Zhu S."/>
            <person name="Zimmer A."/>
            <person name="Hide W."/>
            <person name="Bult C."/>
            <person name="Grimmond S.M."/>
            <person name="Teasdale R.D."/>
            <person name="Liu E.T."/>
            <person name="Brusic V."/>
            <person name="Quackenbush J."/>
            <person name="Wahlestedt C."/>
            <person name="Mattick J.S."/>
            <person name="Hume D.A."/>
            <person name="Kai C."/>
            <person name="Sasaki D."/>
            <person name="Tomaru Y."/>
            <person name="Fukuda S."/>
            <person name="Kanamori-Katayama M."/>
            <person name="Suzuki M."/>
            <person name="Aoki J."/>
            <person name="Arakawa T."/>
            <person name="Iida J."/>
            <person name="Imamura K."/>
            <person name="Itoh M."/>
            <person name="Kato T."/>
            <person name="Kawaji H."/>
            <person name="Kawagashira N."/>
            <person name="Kawashima T."/>
            <person name="Kojima M."/>
            <person name="Kondo S."/>
            <person name="Konno H."/>
            <person name="Nakano K."/>
            <person name="Ninomiya N."/>
            <person name="Nishio T."/>
            <person name="Okada M."/>
            <person name="Plessy C."/>
            <person name="Shibata K."/>
            <person name="Shiraki T."/>
            <person name="Suzuki S."/>
            <person name="Tagami M."/>
            <person name="Waki K."/>
            <person name="Watahiki A."/>
            <person name="Okamura-Oho Y."/>
            <person name="Suzuki H."/>
            <person name="Kawai J."/>
            <person name="Hayashizaki Y."/>
        </authorList>
    </citation>
    <scope>NUCLEOTIDE SEQUENCE [LARGE SCALE MRNA]</scope>
    <source>
        <strain>C57BL/6J</strain>
        <tissue>Head</tissue>
        <tissue>Retina</tissue>
    </source>
</reference>
<reference key="3">
    <citation type="journal article" date="2004" name="Genome Res.">
        <title>The status, quality, and expansion of the NIH full-length cDNA project: the Mammalian Gene Collection (MGC).</title>
        <authorList>
            <consortium name="The MGC Project Team"/>
        </authorList>
    </citation>
    <scope>NUCLEOTIDE SEQUENCE [LARGE SCALE MRNA]</scope>
    <source>
        <tissue>Molar</tissue>
    </source>
</reference>
<reference key="4">
    <citation type="journal article" date="2013" name="Cell Rep.">
        <title>TAFA4, a chemokine-like protein, modulates injury-induced mechanical and chemical pain hypersensitivity in mice.</title>
        <authorList>
            <person name="Delfini M.C."/>
            <person name="Mantilleri A."/>
            <person name="Gaillard S."/>
            <person name="Hao J."/>
            <person name="Reynders A."/>
            <person name="Malapert P."/>
            <person name="Alonso S."/>
            <person name="Francois A."/>
            <person name="Barrere C."/>
            <person name="Seal R."/>
            <person name="Landry M."/>
            <person name="Eschallier A."/>
            <person name="Alloui A."/>
            <person name="Bourinet E."/>
            <person name="Delmas P."/>
            <person name="Le Feuvre Y."/>
            <person name="Moqrich A."/>
        </authorList>
    </citation>
    <scope>FUNCTION</scope>
    <scope>DISRUPTION PHENOTYPE</scope>
    <scope>TISSUE SPECIFICITY</scope>
</reference>
<reference key="5">
    <citation type="journal article" date="2015" name="Cell. Mol. Immunol.">
        <title>FAM19A4 is a novel cytokine ligand of formyl peptide receptor 1 (FPR1) and is able to promote the migration and phagocytosis of macrophages.</title>
        <authorList>
            <person name="Wang W."/>
            <person name="Li T."/>
            <person name="Wang X."/>
            <person name="Yuan W."/>
            <person name="Cheng Y."/>
            <person name="Zhang H."/>
            <person name="Xu E."/>
            <person name="Zhang Y."/>
            <person name="Shi S."/>
            <person name="Ma D."/>
            <person name="Han W."/>
        </authorList>
    </citation>
    <scope>TISSUE SPECIFICITY</scope>
    <scope>SUBCELLULAR LOCATION</scope>
    <scope>INDUCTION BY LPS</scope>
</reference>
<feature type="signal peptide" evidence="2">
    <location>
        <begin position="1"/>
        <end position="31"/>
    </location>
</feature>
<feature type="chain" id="PRO_0000042730" description="Chemokine-like protein TAFA-4">
    <location>
        <begin position="32"/>
        <end position="135"/>
    </location>
</feature>
<feature type="sequence conflict" description="In Ref. 3; AAH89490." evidence="5" ref="3">
    <original>V</original>
    <variation>A</variation>
    <location>
        <position position="3"/>
    </location>
</feature>
<protein>
    <recommendedName>
        <fullName evidence="5">Chemokine-like protein TAFA-4</fullName>
    </recommendedName>
</protein>
<keyword id="KW-1185">Reference proteome</keyword>
<keyword id="KW-0964">Secreted</keyword>
<keyword id="KW-0732">Signal</keyword>
<dbReference type="EMBL" id="AY325123">
    <property type="protein sequence ID" value="AAP92415.1"/>
    <property type="molecule type" value="mRNA"/>
</dbReference>
<dbReference type="EMBL" id="AK081531">
    <property type="protein sequence ID" value="BAC38247.1"/>
    <property type="status" value="ALT_FRAME"/>
    <property type="molecule type" value="mRNA"/>
</dbReference>
<dbReference type="EMBL" id="AK149355">
    <property type="protein sequence ID" value="BAE28831.1"/>
    <property type="molecule type" value="mRNA"/>
</dbReference>
<dbReference type="EMBL" id="BC089490">
    <property type="protein sequence ID" value="AAH89490.1"/>
    <property type="molecule type" value="mRNA"/>
</dbReference>
<dbReference type="CCDS" id="CCDS51858.1"/>
<dbReference type="RefSeq" id="NP_796207.2">
    <property type="nucleotide sequence ID" value="NM_177233.5"/>
</dbReference>
<dbReference type="RefSeq" id="XP_017177137.1">
    <property type="nucleotide sequence ID" value="XM_017321648.3"/>
</dbReference>
<dbReference type="RefSeq" id="XP_036022129.1">
    <property type="nucleotide sequence ID" value="XM_036166236.1"/>
</dbReference>
<dbReference type="RefSeq" id="XP_036022130.1">
    <property type="nucleotide sequence ID" value="XM_036166237.1"/>
</dbReference>
<dbReference type="FunCoup" id="Q7TPG5">
    <property type="interactions" value="461"/>
</dbReference>
<dbReference type="STRING" id="10090.ENSMUSP00000086710"/>
<dbReference type="PaxDb" id="10090-ENSMUSP00000086710"/>
<dbReference type="Antibodypedia" id="46378">
    <property type="antibodies" value="102 antibodies from 14 providers"/>
</dbReference>
<dbReference type="Ensembl" id="ENSMUST00000089295.6">
    <property type="protein sequence ID" value="ENSMUSP00000086710.5"/>
    <property type="gene ID" value="ENSMUSG00000046500.9"/>
</dbReference>
<dbReference type="GeneID" id="320701"/>
<dbReference type="KEGG" id="mmu:320701"/>
<dbReference type="UCSC" id="uc009dah.1">
    <property type="organism name" value="mouse"/>
</dbReference>
<dbReference type="AGR" id="MGI:2444563"/>
<dbReference type="CTD" id="151647"/>
<dbReference type="MGI" id="MGI:2444563">
    <property type="gene designation" value="Tafa4"/>
</dbReference>
<dbReference type="VEuPathDB" id="HostDB:ENSMUSG00000046500"/>
<dbReference type="eggNOG" id="ENOG502RZN9">
    <property type="taxonomic scope" value="Eukaryota"/>
</dbReference>
<dbReference type="GeneTree" id="ENSGT00940000159882"/>
<dbReference type="HOGENOM" id="CLU_126078_3_0_1"/>
<dbReference type="InParanoid" id="Q7TPG5"/>
<dbReference type="OMA" id="HWVFLAY"/>
<dbReference type="OrthoDB" id="9924724at2759"/>
<dbReference type="PhylomeDB" id="Q7TPG5"/>
<dbReference type="TreeFam" id="TF331749"/>
<dbReference type="BioGRID-ORCS" id="320701">
    <property type="hits" value="2 hits in 77 CRISPR screens"/>
</dbReference>
<dbReference type="ChiTaRS" id="Tafa4">
    <property type="organism name" value="mouse"/>
</dbReference>
<dbReference type="PRO" id="PR:Q7TPG5"/>
<dbReference type="Proteomes" id="UP000000589">
    <property type="component" value="Chromosome 6"/>
</dbReference>
<dbReference type="RNAct" id="Q7TPG5">
    <property type="molecule type" value="protein"/>
</dbReference>
<dbReference type="Bgee" id="ENSMUSG00000046500">
    <property type="expression patterns" value="Expressed in lumbar dorsal root ganglion and 68 other cell types or tissues"/>
</dbReference>
<dbReference type="GO" id="GO:0005615">
    <property type="term" value="C:extracellular space"/>
    <property type="evidence" value="ECO:0000314"/>
    <property type="project" value="UniProtKB"/>
</dbReference>
<dbReference type="GO" id="GO:0098978">
    <property type="term" value="C:glutamatergic synapse"/>
    <property type="evidence" value="ECO:0000314"/>
    <property type="project" value="SynGO"/>
</dbReference>
<dbReference type="GO" id="GO:0030672">
    <property type="term" value="C:synaptic vesicle membrane"/>
    <property type="evidence" value="ECO:0000314"/>
    <property type="project" value="SynGO"/>
</dbReference>
<dbReference type="GO" id="GO:0048018">
    <property type="term" value="F:receptor ligand activity"/>
    <property type="evidence" value="ECO:0000314"/>
    <property type="project" value="UniProtKB"/>
</dbReference>
<dbReference type="GO" id="GO:0048246">
    <property type="term" value="P:macrophage chemotaxis"/>
    <property type="evidence" value="ECO:0000314"/>
    <property type="project" value="UniProtKB"/>
</dbReference>
<dbReference type="GO" id="GO:0006909">
    <property type="term" value="P:phagocytosis"/>
    <property type="evidence" value="ECO:0000314"/>
    <property type="project" value="UniProtKB"/>
</dbReference>
<dbReference type="GO" id="GO:0042391">
    <property type="term" value="P:regulation of membrane potential"/>
    <property type="evidence" value="ECO:0000315"/>
    <property type="project" value="MGI"/>
</dbReference>
<dbReference type="GO" id="GO:0051930">
    <property type="term" value="P:regulation of sensory perception of pain"/>
    <property type="evidence" value="ECO:0000315"/>
    <property type="project" value="MGI"/>
</dbReference>
<dbReference type="GO" id="GO:0010469">
    <property type="term" value="P:regulation of signaling receptor activity"/>
    <property type="evidence" value="ECO:0000314"/>
    <property type="project" value="UniProtKB"/>
</dbReference>
<dbReference type="GO" id="GO:0042554">
    <property type="term" value="P:superoxide anion generation"/>
    <property type="evidence" value="ECO:0000314"/>
    <property type="project" value="UniProtKB"/>
</dbReference>
<dbReference type="InterPro" id="IPR020350">
    <property type="entry name" value="Chemokine-like_TAFA"/>
</dbReference>
<dbReference type="InterPro" id="IPR051743">
    <property type="entry name" value="TAFA_chemokine-like"/>
</dbReference>
<dbReference type="PANTHER" id="PTHR31770">
    <property type="entry name" value="CHEMOKINE-LIKE PROTEIN TAFA FAMILY MEMBER"/>
    <property type="match status" value="1"/>
</dbReference>
<dbReference type="PANTHER" id="PTHR31770:SF7">
    <property type="entry name" value="CHEMOKINE-LIKE PROTEIN TAFA-4"/>
    <property type="match status" value="1"/>
</dbReference>
<dbReference type="Pfam" id="PF12020">
    <property type="entry name" value="TAFA"/>
    <property type="match status" value="1"/>
</dbReference>
<name>TAFA4_MOUSE</name>
<evidence type="ECO:0000250" key="1">
    <source>
        <dbReference type="UniProtKB" id="Q96LR4"/>
    </source>
</evidence>
<evidence type="ECO:0000255" key="2"/>
<evidence type="ECO:0000269" key="3">
    <source>
    </source>
</evidence>
<evidence type="ECO:0000269" key="4">
    <source>
    </source>
</evidence>
<evidence type="ECO:0000305" key="5"/>
<organism>
    <name type="scientific">Mus musculus</name>
    <name type="common">Mouse</name>
    <dbReference type="NCBI Taxonomy" id="10090"/>
    <lineage>
        <taxon>Eukaryota</taxon>
        <taxon>Metazoa</taxon>
        <taxon>Chordata</taxon>
        <taxon>Craniata</taxon>
        <taxon>Vertebrata</taxon>
        <taxon>Euteleostomi</taxon>
        <taxon>Mammalia</taxon>
        <taxon>Eutheria</taxon>
        <taxon>Euarchontoglires</taxon>
        <taxon>Glires</taxon>
        <taxon>Rodentia</taxon>
        <taxon>Myomorpha</taxon>
        <taxon>Muroidea</taxon>
        <taxon>Muridae</taxon>
        <taxon>Murinae</taxon>
        <taxon>Mus</taxon>
        <taxon>Mus</taxon>
    </lineage>
</organism>
<gene>
    <name type="primary">Tafa4</name>
    <name type="synonym">Fam19a4</name>
</gene>
<proteinExistence type="evidence at protein level"/>
<comment type="function">
    <text evidence="3 4">Modulates injury-induced and chemical pain hypersensitivity (PubMed:24139797). Ligand of FPR1, can chemoattract macrophages, promote phagocytosis and increase ROS release (PubMed:25109685).</text>
</comment>
<comment type="subcellular location">
    <subcellularLocation>
        <location evidence="1">Secreted</location>
    </subcellularLocation>
</comment>
<comment type="tissue specificity">
    <text evidence="3 4">Expressed in a descrete subset of dorsal root ganglia neurons called C-low-threshold mechanoreceptors (at protein level) (PubMed:24139797). Expressed in LPS-stimulated monocytes and macrophages, especially in polarized M1 (PubMed:25109685).</text>
</comment>
<comment type="induction">
    <text evidence="4">Up-regulated in LPS-stimulated monocytes and macrophages, especially in polarized M1.</text>
</comment>
<comment type="disruption phenotype">
    <text evidence="3">Mutant mice exhibit enhanced mechanical and chemical hypersensitivity following inflammation and nerve injury.</text>
</comment>
<comment type="similarity">
    <text evidence="5">Belongs to the TAFA family.</text>
</comment>
<comment type="sequence caution" evidence="5">
    <conflict type="frameshift">
        <sequence resource="EMBL-CDS" id="BAC38247"/>
    </conflict>
</comment>
<accession>Q7TPG5</accession>
<accession>Q5FWC0</accession>
<accession>Q8BV02</accession>